<protein>
    <recommendedName>
        <fullName>Quinolone resistance protein NorB</fullName>
    </recommendedName>
</protein>
<evidence type="ECO:0000250" key="1"/>
<evidence type="ECO:0000255" key="2"/>
<evidence type="ECO:0000305" key="3"/>
<feature type="chain" id="PRO_0000361959" description="Quinolone resistance protein NorB">
    <location>
        <begin position="1"/>
        <end position="463"/>
    </location>
</feature>
<feature type="transmembrane region" description="Helical" evidence="2">
    <location>
        <begin position="17"/>
        <end position="37"/>
    </location>
</feature>
<feature type="transmembrane region" description="Helical" evidence="2">
    <location>
        <begin position="53"/>
        <end position="73"/>
    </location>
</feature>
<feature type="transmembrane region" description="Helical" evidence="2">
    <location>
        <begin position="86"/>
        <end position="106"/>
    </location>
</feature>
<feature type="transmembrane region" description="Helical" evidence="2">
    <location>
        <begin position="107"/>
        <end position="127"/>
    </location>
</feature>
<feature type="transmembrane region" description="Helical" evidence="2">
    <location>
        <begin position="142"/>
        <end position="162"/>
    </location>
</feature>
<feature type="transmembrane region" description="Helical" evidence="2">
    <location>
        <begin position="165"/>
        <end position="185"/>
    </location>
</feature>
<feature type="transmembrane region" description="Helical" evidence="2">
    <location>
        <begin position="201"/>
        <end position="221"/>
    </location>
</feature>
<feature type="transmembrane region" description="Helical" evidence="2">
    <location>
        <begin position="230"/>
        <end position="250"/>
    </location>
</feature>
<feature type="transmembrane region" description="Helical" evidence="2">
    <location>
        <begin position="273"/>
        <end position="293"/>
    </location>
</feature>
<feature type="transmembrane region" description="Helical" evidence="2">
    <location>
        <begin position="299"/>
        <end position="319"/>
    </location>
</feature>
<feature type="transmembrane region" description="Helical" evidence="2">
    <location>
        <begin position="334"/>
        <end position="354"/>
    </location>
</feature>
<feature type="transmembrane region" description="Helical" evidence="2">
    <location>
        <begin position="357"/>
        <end position="377"/>
    </location>
</feature>
<feature type="transmembrane region" description="Helical" evidence="2">
    <location>
        <begin position="403"/>
        <end position="423"/>
    </location>
</feature>
<feature type="transmembrane region" description="Helical" evidence="2">
    <location>
        <begin position="435"/>
        <end position="455"/>
    </location>
</feature>
<gene>
    <name type="primary">norB</name>
    <name type="ordered locus">SAS1379</name>
</gene>
<sequence length="463" mass="49275">MEKPSREAFEGNNKLLIGIVLSVITFWLFAQSLVNVVPILEDSFNTDIGTVNIAVSITALFSGMFVVGAGGLADKYGRIKLTNIGIILNILGSLLIIISNIPLLLIIGRLIQGLSAACIMPATLSIIKSYYIGKDRQRALSYWSIGSWGGSGVCSFFGGAVATLLGWRWIFILSIIISLIALFLIKGTPETKSKSISLNKFDIKGLVLLVIMLLSLNILITKGSELGVSSLLFITLLAITIGSFSLFIVLEKRATNPLIDFKLFKNKAYTGATASNFLLNGVAGTLIVANTFVQRGLGYSSLQAGSLSITYLVMVLIMIRVGEKLLQTLGCKKPMLIGTGVLIVGECLISLTFLPEILYVICCIIGYLFFGLGLGIYATPSTDTAIANAPLEKVGVAAGIYKMASALGGAFGVALSGAVYAIVSNMTNIYTGAMIALWLNAGMGILSFVIILLLVPKQNDTQL</sequence>
<organism>
    <name type="scientific">Staphylococcus aureus (strain MSSA476)</name>
    <dbReference type="NCBI Taxonomy" id="282459"/>
    <lineage>
        <taxon>Bacteria</taxon>
        <taxon>Bacillati</taxon>
        <taxon>Bacillota</taxon>
        <taxon>Bacilli</taxon>
        <taxon>Bacillales</taxon>
        <taxon>Staphylococcaceae</taxon>
        <taxon>Staphylococcus</taxon>
    </lineage>
</organism>
<keyword id="KW-0046">Antibiotic resistance</keyword>
<keyword id="KW-1003">Cell membrane</keyword>
<keyword id="KW-0472">Membrane</keyword>
<keyword id="KW-0812">Transmembrane</keyword>
<keyword id="KW-1133">Transmembrane helix</keyword>
<keyword id="KW-0813">Transport</keyword>
<reference key="1">
    <citation type="journal article" date="2004" name="Proc. Natl. Acad. Sci. U.S.A.">
        <title>Complete genomes of two clinical Staphylococcus aureus strains: evidence for the rapid evolution of virulence and drug resistance.</title>
        <authorList>
            <person name="Holden M.T.G."/>
            <person name="Feil E.J."/>
            <person name="Lindsay J.A."/>
            <person name="Peacock S.J."/>
            <person name="Day N.P.J."/>
            <person name="Enright M.C."/>
            <person name="Foster T.J."/>
            <person name="Moore C.E."/>
            <person name="Hurst L."/>
            <person name="Atkin R."/>
            <person name="Barron A."/>
            <person name="Bason N."/>
            <person name="Bentley S.D."/>
            <person name="Chillingworth C."/>
            <person name="Chillingworth T."/>
            <person name="Churcher C."/>
            <person name="Clark L."/>
            <person name="Corton C."/>
            <person name="Cronin A."/>
            <person name="Doggett J."/>
            <person name="Dowd L."/>
            <person name="Feltwell T."/>
            <person name="Hance Z."/>
            <person name="Harris B."/>
            <person name="Hauser H."/>
            <person name="Holroyd S."/>
            <person name="Jagels K."/>
            <person name="James K.D."/>
            <person name="Lennard N."/>
            <person name="Line A."/>
            <person name="Mayes R."/>
            <person name="Moule S."/>
            <person name="Mungall K."/>
            <person name="Ormond D."/>
            <person name="Quail M.A."/>
            <person name="Rabbinowitsch E."/>
            <person name="Rutherford K.M."/>
            <person name="Sanders M."/>
            <person name="Sharp S."/>
            <person name="Simmonds M."/>
            <person name="Stevens K."/>
            <person name="Whitehead S."/>
            <person name="Barrell B.G."/>
            <person name="Spratt B.G."/>
            <person name="Parkhill J."/>
        </authorList>
    </citation>
    <scope>NUCLEOTIDE SEQUENCE [LARGE SCALE GENOMIC DNA]</scope>
    <source>
        <strain>MSSA476</strain>
    </source>
</reference>
<name>NORB_STAAS</name>
<proteinExistence type="inferred from homology"/>
<comment type="function">
    <text evidence="1">Multidrug efflux pump that acts independently of NorA and is one of the factors that confers resistance against diverse quinolones and chemical compounds.</text>
</comment>
<comment type="subcellular location">
    <subcellularLocation>
        <location evidence="3">Cell membrane</location>
        <topology evidence="3">Multi-pass membrane protein</topology>
    </subcellularLocation>
</comment>
<comment type="similarity">
    <text evidence="3">Belongs to the major facilitator superfamily. TCR/Tet family.</text>
</comment>
<accession>Q6G9C6</accession>
<dbReference type="EMBL" id="BX571857">
    <property type="protein sequence ID" value="CAG43155.1"/>
    <property type="molecule type" value="Genomic_DNA"/>
</dbReference>
<dbReference type="RefSeq" id="WP_000414683.1">
    <property type="nucleotide sequence ID" value="NC_002953.3"/>
</dbReference>
<dbReference type="SMR" id="Q6G9C6"/>
<dbReference type="KEGG" id="sas:SAS1379"/>
<dbReference type="HOGENOM" id="CLU_000960_28_3_9"/>
<dbReference type="GO" id="GO:0005886">
    <property type="term" value="C:plasma membrane"/>
    <property type="evidence" value="ECO:0007669"/>
    <property type="project" value="UniProtKB-SubCell"/>
</dbReference>
<dbReference type="GO" id="GO:0022857">
    <property type="term" value="F:transmembrane transporter activity"/>
    <property type="evidence" value="ECO:0007669"/>
    <property type="project" value="InterPro"/>
</dbReference>
<dbReference type="GO" id="GO:0046677">
    <property type="term" value="P:response to antibiotic"/>
    <property type="evidence" value="ECO:0007669"/>
    <property type="project" value="UniProtKB-KW"/>
</dbReference>
<dbReference type="CDD" id="cd17321">
    <property type="entry name" value="MFS_MMR_MDR_like"/>
    <property type="match status" value="1"/>
</dbReference>
<dbReference type="FunFam" id="1.20.1250.20:FF:000252">
    <property type="entry name" value="Quinolone resistance protein NorB"/>
    <property type="match status" value="1"/>
</dbReference>
<dbReference type="FunFam" id="1.20.1720.10:FF:000015">
    <property type="entry name" value="Quinolone resistance protein NorB"/>
    <property type="match status" value="1"/>
</dbReference>
<dbReference type="Gene3D" id="1.20.1250.20">
    <property type="entry name" value="MFS general substrate transporter like domains"/>
    <property type="match status" value="1"/>
</dbReference>
<dbReference type="Gene3D" id="1.20.1720.10">
    <property type="entry name" value="Multidrug resistance protein D"/>
    <property type="match status" value="1"/>
</dbReference>
<dbReference type="InterPro" id="IPR011701">
    <property type="entry name" value="MFS"/>
</dbReference>
<dbReference type="InterPro" id="IPR020846">
    <property type="entry name" value="MFS_dom"/>
</dbReference>
<dbReference type="InterPro" id="IPR036259">
    <property type="entry name" value="MFS_trans_sf"/>
</dbReference>
<dbReference type="PANTHER" id="PTHR42718">
    <property type="entry name" value="MAJOR FACILITATOR SUPERFAMILY MULTIDRUG TRANSPORTER MFSC"/>
    <property type="match status" value="1"/>
</dbReference>
<dbReference type="PANTHER" id="PTHR42718:SF9">
    <property type="entry name" value="MAJOR FACILITATOR SUPERFAMILY MULTIDRUG TRANSPORTER MFSC"/>
    <property type="match status" value="1"/>
</dbReference>
<dbReference type="Pfam" id="PF07690">
    <property type="entry name" value="MFS_1"/>
    <property type="match status" value="1"/>
</dbReference>
<dbReference type="SUPFAM" id="SSF103473">
    <property type="entry name" value="MFS general substrate transporter"/>
    <property type="match status" value="1"/>
</dbReference>
<dbReference type="PROSITE" id="PS50850">
    <property type="entry name" value="MFS"/>
    <property type="match status" value="1"/>
</dbReference>